<dbReference type="EC" id="2.7.4.25" evidence="1"/>
<dbReference type="EMBL" id="CP000936">
    <property type="protein sequence ID" value="ACA35730.1"/>
    <property type="molecule type" value="Genomic_DNA"/>
</dbReference>
<dbReference type="RefSeq" id="WP_000849378.1">
    <property type="nucleotide sequence ID" value="NC_010380.1"/>
</dbReference>
<dbReference type="SMR" id="B1ID16"/>
<dbReference type="GeneID" id="45653168"/>
<dbReference type="KEGG" id="spv:SPH_1716"/>
<dbReference type="HOGENOM" id="CLU_079959_0_2_9"/>
<dbReference type="Proteomes" id="UP000002163">
    <property type="component" value="Chromosome"/>
</dbReference>
<dbReference type="GO" id="GO:0005829">
    <property type="term" value="C:cytosol"/>
    <property type="evidence" value="ECO:0007669"/>
    <property type="project" value="TreeGrafter"/>
</dbReference>
<dbReference type="GO" id="GO:0005524">
    <property type="term" value="F:ATP binding"/>
    <property type="evidence" value="ECO:0007669"/>
    <property type="project" value="UniProtKB-UniRule"/>
</dbReference>
<dbReference type="GO" id="GO:0036430">
    <property type="term" value="F:CMP kinase activity"/>
    <property type="evidence" value="ECO:0007669"/>
    <property type="project" value="RHEA"/>
</dbReference>
<dbReference type="GO" id="GO:0036431">
    <property type="term" value="F:dCMP kinase activity"/>
    <property type="evidence" value="ECO:0007669"/>
    <property type="project" value="RHEA"/>
</dbReference>
<dbReference type="GO" id="GO:0015949">
    <property type="term" value="P:nucleobase-containing small molecule interconversion"/>
    <property type="evidence" value="ECO:0007669"/>
    <property type="project" value="TreeGrafter"/>
</dbReference>
<dbReference type="GO" id="GO:0006220">
    <property type="term" value="P:pyrimidine nucleotide metabolic process"/>
    <property type="evidence" value="ECO:0007669"/>
    <property type="project" value="UniProtKB-UniRule"/>
</dbReference>
<dbReference type="CDD" id="cd02020">
    <property type="entry name" value="CMPK"/>
    <property type="match status" value="1"/>
</dbReference>
<dbReference type="FunFam" id="3.40.50.300:FF:000484">
    <property type="entry name" value="Cytidylate kinase"/>
    <property type="match status" value="1"/>
</dbReference>
<dbReference type="Gene3D" id="3.40.50.300">
    <property type="entry name" value="P-loop containing nucleotide triphosphate hydrolases"/>
    <property type="match status" value="1"/>
</dbReference>
<dbReference type="HAMAP" id="MF_00238">
    <property type="entry name" value="Cytidyl_kinase_type1"/>
    <property type="match status" value="1"/>
</dbReference>
<dbReference type="InterPro" id="IPR003136">
    <property type="entry name" value="Cytidylate_kin"/>
</dbReference>
<dbReference type="InterPro" id="IPR011994">
    <property type="entry name" value="Cytidylate_kinase_dom"/>
</dbReference>
<dbReference type="InterPro" id="IPR027417">
    <property type="entry name" value="P-loop_NTPase"/>
</dbReference>
<dbReference type="NCBIfam" id="TIGR00017">
    <property type="entry name" value="cmk"/>
    <property type="match status" value="1"/>
</dbReference>
<dbReference type="PANTHER" id="PTHR21299:SF2">
    <property type="entry name" value="CYTIDYLATE KINASE"/>
    <property type="match status" value="1"/>
</dbReference>
<dbReference type="PANTHER" id="PTHR21299">
    <property type="entry name" value="CYTIDYLATE KINASE/PANTOATE-BETA-ALANINE LIGASE"/>
    <property type="match status" value="1"/>
</dbReference>
<dbReference type="Pfam" id="PF02224">
    <property type="entry name" value="Cytidylate_kin"/>
    <property type="match status" value="1"/>
</dbReference>
<dbReference type="SUPFAM" id="SSF52540">
    <property type="entry name" value="P-loop containing nucleoside triphosphate hydrolases"/>
    <property type="match status" value="1"/>
</dbReference>
<proteinExistence type="inferred from homology"/>
<evidence type="ECO:0000255" key="1">
    <source>
        <dbReference type="HAMAP-Rule" id="MF_00238"/>
    </source>
</evidence>
<gene>
    <name evidence="1" type="primary">cmk</name>
    <name type="ordered locus">SPH_1716</name>
</gene>
<protein>
    <recommendedName>
        <fullName evidence="1">Cytidylate kinase</fullName>
        <shortName evidence="1">CK</shortName>
        <ecNumber evidence="1">2.7.4.25</ecNumber>
    </recommendedName>
    <alternativeName>
        <fullName evidence="1">Cytidine monophosphate kinase</fullName>
        <shortName evidence="1">CMP kinase</shortName>
    </alternativeName>
</protein>
<name>KCY_STRPI</name>
<organism>
    <name type="scientific">Streptococcus pneumoniae (strain Hungary19A-6)</name>
    <dbReference type="NCBI Taxonomy" id="487214"/>
    <lineage>
        <taxon>Bacteria</taxon>
        <taxon>Bacillati</taxon>
        <taxon>Bacillota</taxon>
        <taxon>Bacilli</taxon>
        <taxon>Lactobacillales</taxon>
        <taxon>Streptococcaceae</taxon>
        <taxon>Streptococcus</taxon>
    </lineage>
</organism>
<accession>B1ID16</accession>
<comment type="catalytic activity">
    <reaction evidence="1">
        <text>CMP + ATP = CDP + ADP</text>
        <dbReference type="Rhea" id="RHEA:11600"/>
        <dbReference type="ChEBI" id="CHEBI:30616"/>
        <dbReference type="ChEBI" id="CHEBI:58069"/>
        <dbReference type="ChEBI" id="CHEBI:60377"/>
        <dbReference type="ChEBI" id="CHEBI:456216"/>
        <dbReference type="EC" id="2.7.4.25"/>
    </reaction>
</comment>
<comment type="catalytic activity">
    <reaction evidence="1">
        <text>dCMP + ATP = dCDP + ADP</text>
        <dbReference type="Rhea" id="RHEA:25094"/>
        <dbReference type="ChEBI" id="CHEBI:30616"/>
        <dbReference type="ChEBI" id="CHEBI:57566"/>
        <dbReference type="ChEBI" id="CHEBI:58593"/>
        <dbReference type="ChEBI" id="CHEBI:456216"/>
        <dbReference type="EC" id="2.7.4.25"/>
    </reaction>
</comment>
<comment type="subcellular location">
    <subcellularLocation>
        <location evidence="1">Cytoplasm</location>
    </subcellularLocation>
</comment>
<comment type="similarity">
    <text evidence="1">Belongs to the cytidylate kinase family. Type 1 subfamily.</text>
</comment>
<feature type="chain" id="PRO_1000100694" description="Cytidylate kinase">
    <location>
        <begin position="1"/>
        <end position="223"/>
    </location>
</feature>
<feature type="binding site" evidence="1">
    <location>
        <begin position="10"/>
        <end position="18"/>
    </location>
    <ligand>
        <name>ATP</name>
        <dbReference type="ChEBI" id="CHEBI:30616"/>
    </ligand>
</feature>
<keyword id="KW-0067">ATP-binding</keyword>
<keyword id="KW-0963">Cytoplasm</keyword>
<keyword id="KW-0418">Kinase</keyword>
<keyword id="KW-0547">Nucleotide-binding</keyword>
<keyword id="KW-0808">Transferase</keyword>
<reference key="1">
    <citation type="journal article" date="2010" name="Genome Biol.">
        <title>Structure and dynamics of the pan-genome of Streptococcus pneumoniae and closely related species.</title>
        <authorList>
            <person name="Donati C."/>
            <person name="Hiller N.L."/>
            <person name="Tettelin H."/>
            <person name="Muzzi A."/>
            <person name="Croucher N.J."/>
            <person name="Angiuoli S.V."/>
            <person name="Oggioni M."/>
            <person name="Dunning Hotopp J.C."/>
            <person name="Hu F.Z."/>
            <person name="Riley D.R."/>
            <person name="Covacci A."/>
            <person name="Mitchell T.J."/>
            <person name="Bentley S.D."/>
            <person name="Kilian M."/>
            <person name="Ehrlich G.D."/>
            <person name="Rappuoli R."/>
            <person name="Moxon E.R."/>
            <person name="Masignani V."/>
        </authorList>
    </citation>
    <scope>NUCLEOTIDE SEQUENCE [LARGE SCALE GENOMIC DNA]</scope>
    <source>
        <strain>Hungary19A-6</strain>
    </source>
</reference>
<sequence length="223" mass="24598">MKTIQIAIDGPASSGKSTVAKIIAKDFGFTYLDTGAMYRAATYMALKNQLGVEEVEALLALLDQHPISFGRSETGDQLVFVGDVDITHPIRENEVTNHVSAIAAIPEVREKLVSLQQEIAQQGGIVMDGRDIGTVVLPQAELKIFLVASVDERAERRYKENIAKGIETDLETLKKEIAARDYKDSHRETSPLKQAEDAVYLDTTGLNIQEVVEKIKAEAEKRM</sequence>